<protein>
    <recommendedName>
        <fullName evidence="1">Energy-coupling factor transporter transmembrane protein EcfT</fullName>
        <shortName evidence="1">ECF transporter T component EcfT</shortName>
    </recommendedName>
</protein>
<keyword id="KW-1003">Cell membrane</keyword>
<keyword id="KW-0472">Membrane</keyword>
<keyword id="KW-1185">Reference proteome</keyword>
<keyword id="KW-0812">Transmembrane</keyword>
<keyword id="KW-1133">Transmembrane helix</keyword>
<keyword id="KW-0813">Transport</keyword>
<sequence>MLKDITLGQYVPLDSPVHRLDPRTKVIATLLFSIALFLLPTLRSVTLAGLPIIIAIVATRLPIHYILRGIKPLWIFIVFTLLVHLLSTPGETAVRLGPFAITWEGLRQGAMVSQRLIWLYAATSLLTLTTSPIALTDGLELLLSPGKRIGLPVHEFAMMTSIALRFIPTLIEETEKIMKAQSSRGADFDSGSLVARVKSLVPLMVPLLLSAFRRADELAMAMEARCYRGGEGRTRMRPLVMSGKDYAVTVAVSGVFILICLWKKAL</sequence>
<comment type="function">
    <text evidence="1">Transmembrane (T) component of an energy-coupling factor (ECF) ABC-transporter complex. Unlike classic ABC transporters this ECF transporter provides the energy necessary to transport a number of different substrates.</text>
</comment>
<comment type="subunit">
    <text evidence="1">Forms a stable energy-coupling factor (ECF) transporter complex composed of 2 membrane-embedded substrate-binding proteins (S component), 2 ATP-binding proteins (A component) and 2 transmembrane proteins (T component). May be able to interact with more than 1 S component at a time (By similarity).</text>
</comment>
<comment type="subcellular location">
    <subcellularLocation>
        <location evidence="1">Cell membrane</location>
        <topology evidence="1">Multi-pass membrane protein</topology>
    </subcellularLocation>
</comment>
<comment type="similarity">
    <text evidence="1">Belongs to the energy-coupling factor EcfT family.</text>
</comment>
<organism>
    <name type="scientific">Heliobacterium modesticaldum (strain ATCC 51547 / Ice1)</name>
    <dbReference type="NCBI Taxonomy" id="498761"/>
    <lineage>
        <taxon>Bacteria</taxon>
        <taxon>Bacillati</taxon>
        <taxon>Bacillota</taxon>
        <taxon>Clostridia</taxon>
        <taxon>Eubacteriales</taxon>
        <taxon>Heliobacteriaceae</taxon>
        <taxon>Heliomicrobium</taxon>
    </lineage>
</organism>
<reference key="1">
    <citation type="journal article" date="2008" name="J. Bacteriol.">
        <title>The genome of Heliobacterium modesticaldum, a phototrophic representative of the Firmicutes containing the simplest photosynthetic apparatus.</title>
        <authorList>
            <person name="Sattley W.M."/>
            <person name="Madigan M.T."/>
            <person name="Swingley W.D."/>
            <person name="Cheung P.C."/>
            <person name="Clocksin K.M."/>
            <person name="Conrad A.L."/>
            <person name="Dejesa L.C."/>
            <person name="Honchak B.M."/>
            <person name="Jung D.O."/>
            <person name="Karbach L.E."/>
            <person name="Kurdoglu A."/>
            <person name="Lahiri S."/>
            <person name="Mastrian S.D."/>
            <person name="Page L.E."/>
            <person name="Taylor H.L."/>
            <person name="Wang Z.T."/>
            <person name="Raymond J."/>
            <person name="Chen M."/>
            <person name="Blankenship R.E."/>
            <person name="Touchman J.W."/>
        </authorList>
    </citation>
    <scope>NUCLEOTIDE SEQUENCE [LARGE SCALE GENOMIC DNA]</scope>
    <source>
        <strain>ATCC 51547 / Ice1</strain>
    </source>
</reference>
<name>ECFT_HELMI</name>
<evidence type="ECO:0000255" key="1">
    <source>
        <dbReference type="HAMAP-Rule" id="MF_01461"/>
    </source>
</evidence>
<proteinExistence type="inferred from homology"/>
<dbReference type="EMBL" id="CP000930">
    <property type="protein sequence ID" value="ABZ83988.1"/>
    <property type="molecule type" value="Genomic_DNA"/>
</dbReference>
<dbReference type="RefSeq" id="WP_012282504.1">
    <property type="nucleotide sequence ID" value="NC_010337.2"/>
</dbReference>
<dbReference type="SMR" id="B0TC89"/>
<dbReference type="STRING" id="498761.HM1_1411"/>
<dbReference type="KEGG" id="hmo:HM1_1411"/>
<dbReference type="eggNOG" id="COG0619">
    <property type="taxonomic scope" value="Bacteria"/>
</dbReference>
<dbReference type="HOGENOM" id="CLU_056469_2_2_9"/>
<dbReference type="OrthoDB" id="8075495at2"/>
<dbReference type="Proteomes" id="UP000008550">
    <property type="component" value="Chromosome"/>
</dbReference>
<dbReference type="GO" id="GO:0005886">
    <property type="term" value="C:plasma membrane"/>
    <property type="evidence" value="ECO:0007669"/>
    <property type="project" value="UniProtKB-SubCell"/>
</dbReference>
<dbReference type="GO" id="GO:0022857">
    <property type="term" value="F:transmembrane transporter activity"/>
    <property type="evidence" value="ECO:0007669"/>
    <property type="project" value="UniProtKB-UniRule"/>
</dbReference>
<dbReference type="CDD" id="cd16914">
    <property type="entry name" value="EcfT"/>
    <property type="match status" value="1"/>
</dbReference>
<dbReference type="HAMAP" id="MF_01461">
    <property type="entry name" value="EcfT"/>
    <property type="match status" value="1"/>
</dbReference>
<dbReference type="InterPro" id="IPR003339">
    <property type="entry name" value="ABC/ECF_trnsptr_transmembrane"/>
</dbReference>
<dbReference type="InterPro" id="IPR051611">
    <property type="entry name" value="ECF_transporter_component"/>
</dbReference>
<dbReference type="InterPro" id="IPR024919">
    <property type="entry name" value="EcfT"/>
</dbReference>
<dbReference type="PANTHER" id="PTHR34857">
    <property type="entry name" value="SLL0384 PROTEIN"/>
    <property type="match status" value="1"/>
</dbReference>
<dbReference type="PANTHER" id="PTHR34857:SF2">
    <property type="entry name" value="SLL0384 PROTEIN"/>
    <property type="match status" value="1"/>
</dbReference>
<dbReference type="Pfam" id="PF02361">
    <property type="entry name" value="CbiQ"/>
    <property type="match status" value="1"/>
</dbReference>
<feature type="chain" id="PRO_0000408989" description="Energy-coupling factor transporter transmembrane protein EcfT">
    <location>
        <begin position="1"/>
        <end position="266"/>
    </location>
</feature>
<feature type="transmembrane region" description="Helical" evidence="1">
    <location>
        <begin position="26"/>
        <end position="46"/>
    </location>
</feature>
<feature type="transmembrane region" description="Helical" evidence="1">
    <location>
        <begin position="47"/>
        <end position="67"/>
    </location>
</feature>
<feature type="transmembrane region" description="Helical" evidence="1">
    <location>
        <begin position="69"/>
        <end position="89"/>
    </location>
</feature>
<feature type="transmembrane region" description="Helical" evidence="1">
    <location>
        <begin position="116"/>
        <end position="136"/>
    </location>
</feature>
<feature type="transmembrane region" description="Helical" evidence="1">
    <location>
        <begin position="151"/>
        <end position="171"/>
    </location>
</feature>
<feature type="transmembrane region" description="Helical" evidence="1">
    <location>
        <begin position="192"/>
        <end position="212"/>
    </location>
</feature>
<feature type="transmembrane region" description="Helical" evidence="1">
    <location>
        <begin position="246"/>
        <end position="266"/>
    </location>
</feature>
<accession>B0TC89</accession>
<gene>
    <name evidence="1" type="primary">ecfT</name>
    <name type="ordered locus">Helmi_13630</name>
    <name type="ORF">HM1_1411</name>
</gene>